<protein>
    <recommendedName>
        <fullName>Uncharacterized HTH-type transcriptional regulator Rv2912c</fullName>
    </recommendedName>
</protein>
<proteinExistence type="evidence at protein level"/>
<reference key="1">
    <citation type="journal article" date="1998" name="Nature">
        <title>Deciphering the biology of Mycobacterium tuberculosis from the complete genome sequence.</title>
        <authorList>
            <person name="Cole S.T."/>
            <person name="Brosch R."/>
            <person name="Parkhill J."/>
            <person name="Garnier T."/>
            <person name="Churcher C.M."/>
            <person name="Harris D.E."/>
            <person name="Gordon S.V."/>
            <person name="Eiglmeier K."/>
            <person name="Gas S."/>
            <person name="Barry C.E. III"/>
            <person name="Tekaia F."/>
            <person name="Badcock K."/>
            <person name="Basham D."/>
            <person name="Brown D."/>
            <person name="Chillingworth T."/>
            <person name="Connor R."/>
            <person name="Davies R.M."/>
            <person name="Devlin K."/>
            <person name="Feltwell T."/>
            <person name="Gentles S."/>
            <person name="Hamlin N."/>
            <person name="Holroyd S."/>
            <person name="Hornsby T."/>
            <person name="Jagels K."/>
            <person name="Krogh A."/>
            <person name="McLean J."/>
            <person name="Moule S."/>
            <person name="Murphy L.D."/>
            <person name="Oliver S."/>
            <person name="Osborne J."/>
            <person name="Quail M.A."/>
            <person name="Rajandream M.A."/>
            <person name="Rogers J."/>
            <person name="Rutter S."/>
            <person name="Seeger K."/>
            <person name="Skelton S."/>
            <person name="Squares S."/>
            <person name="Squares R."/>
            <person name="Sulston J.E."/>
            <person name="Taylor K."/>
            <person name="Whitehead S."/>
            <person name="Barrell B.G."/>
        </authorList>
    </citation>
    <scope>NUCLEOTIDE SEQUENCE [LARGE SCALE GENOMIC DNA]</scope>
    <source>
        <strain>ATCC 25618 / H37Rv</strain>
    </source>
</reference>
<reference key="2">
    <citation type="journal article" date="2011" name="Mol. Cell. Proteomics">
        <title>Proteogenomic analysis of Mycobacterium tuberculosis by high resolution mass spectrometry.</title>
        <authorList>
            <person name="Kelkar D.S."/>
            <person name="Kumar D."/>
            <person name="Kumar P."/>
            <person name="Balakrishnan L."/>
            <person name="Muthusamy B."/>
            <person name="Yadav A.K."/>
            <person name="Shrivastava P."/>
            <person name="Marimuthu A."/>
            <person name="Anand S."/>
            <person name="Sundaram H."/>
            <person name="Kingsbury R."/>
            <person name="Harsha H.C."/>
            <person name="Nair B."/>
            <person name="Prasad T.S."/>
            <person name="Chauhan D.S."/>
            <person name="Katoch K."/>
            <person name="Katoch V.M."/>
            <person name="Kumar P."/>
            <person name="Chaerkady R."/>
            <person name="Ramachandran S."/>
            <person name="Dash D."/>
            <person name="Pandey A."/>
        </authorList>
    </citation>
    <scope>IDENTIFICATION BY MASS SPECTROMETRY [LARGE SCALE ANALYSIS]</scope>
    <source>
        <strain>ATCC 25618 / H37Rv</strain>
    </source>
</reference>
<sequence length="195" mass="21239">MARTQQQRREETVARLLQASIDTIIEVGYARASAAVITKRAGVSVGALFRHFETMGDFMAATAYEVLRRQLETFTKQVAEIPADRPALPAALTILRDITAGSTNAVLYELMVAARTDEKLKETLQNVLGQYSAKIHDAARALPGAESFPEETFPVIVALMTNVFDGAAIVRGVLPQPELEEQRIPMLTALLTAGL</sequence>
<gene>
    <name type="ordered locus">Rv2912c</name>
    <name type="ORF">MTCY274.44c</name>
</gene>
<accession>P9WMC7</accession>
<accession>L0TCL6</accession>
<accession>P67440</accession>
<accession>Q10829</accession>
<organism>
    <name type="scientific">Mycobacterium tuberculosis (strain ATCC 25618 / H37Rv)</name>
    <dbReference type="NCBI Taxonomy" id="83332"/>
    <lineage>
        <taxon>Bacteria</taxon>
        <taxon>Bacillati</taxon>
        <taxon>Actinomycetota</taxon>
        <taxon>Actinomycetes</taxon>
        <taxon>Mycobacteriales</taxon>
        <taxon>Mycobacteriaceae</taxon>
        <taxon>Mycobacterium</taxon>
        <taxon>Mycobacterium tuberculosis complex</taxon>
    </lineage>
</organism>
<evidence type="ECO:0000255" key="1">
    <source>
        <dbReference type="PROSITE-ProRule" id="PRU00335"/>
    </source>
</evidence>
<name>Y2912_MYCTU</name>
<keyword id="KW-0238">DNA-binding</keyword>
<keyword id="KW-1185">Reference proteome</keyword>
<keyword id="KW-0804">Transcription</keyword>
<keyword id="KW-0805">Transcription regulation</keyword>
<dbReference type="EMBL" id="AL123456">
    <property type="protein sequence ID" value="CCP45714.1"/>
    <property type="molecule type" value="Genomic_DNA"/>
</dbReference>
<dbReference type="PIR" id="C70928">
    <property type="entry name" value="C70928"/>
</dbReference>
<dbReference type="RefSeq" id="NP_217428.1">
    <property type="nucleotide sequence ID" value="NC_000962.3"/>
</dbReference>
<dbReference type="RefSeq" id="WP_003414739.1">
    <property type="nucleotide sequence ID" value="NZ_NVQJ01000006.1"/>
</dbReference>
<dbReference type="SMR" id="P9WMC7"/>
<dbReference type="STRING" id="83332.Rv2912c"/>
<dbReference type="PaxDb" id="83332-Rv2912c"/>
<dbReference type="DNASU" id="888017"/>
<dbReference type="GeneID" id="888017"/>
<dbReference type="KEGG" id="mtu:Rv2912c"/>
<dbReference type="KEGG" id="mtv:RVBD_2912c"/>
<dbReference type="TubercuList" id="Rv2912c"/>
<dbReference type="eggNOG" id="COG1309">
    <property type="taxonomic scope" value="Bacteria"/>
</dbReference>
<dbReference type="InParanoid" id="P9WMC7"/>
<dbReference type="OrthoDB" id="4539007at2"/>
<dbReference type="PhylomeDB" id="P9WMC7"/>
<dbReference type="Proteomes" id="UP000001584">
    <property type="component" value="Chromosome"/>
</dbReference>
<dbReference type="GO" id="GO:0005829">
    <property type="term" value="C:cytosol"/>
    <property type="evidence" value="ECO:0007005"/>
    <property type="project" value="MTBBASE"/>
</dbReference>
<dbReference type="GO" id="GO:0003700">
    <property type="term" value="F:DNA-binding transcription factor activity"/>
    <property type="evidence" value="ECO:0000318"/>
    <property type="project" value="GO_Central"/>
</dbReference>
<dbReference type="GO" id="GO:0000976">
    <property type="term" value="F:transcription cis-regulatory region binding"/>
    <property type="evidence" value="ECO:0000318"/>
    <property type="project" value="GO_Central"/>
</dbReference>
<dbReference type="GO" id="GO:0006355">
    <property type="term" value="P:regulation of DNA-templated transcription"/>
    <property type="evidence" value="ECO:0000318"/>
    <property type="project" value="GO_Central"/>
</dbReference>
<dbReference type="Gene3D" id="1.10.357.10">
    <property type="entry name" value="Tetracycline Repressor, domain 2"/>
    <property type="match status" value="1"/>
</dbReference>
<dbReference type="InterPro" id="IPR023772">
    <property type="entry name" value="DNA-bd_HTH_TetR-type_CS"/>
</dbReference>
<dbReference type="InterPro" id="IPR009057">
    <property type="entry name" value="Homeodomain-like_sf"/>
</dbReference>
<dbReference type="InterPro" id="IPR050109">
    <property type="entry name" value="HTH-type_TetR-like_transc_reg"/>
</dbReference>
<dbReference type="InterPro" id="IPR001647">
    <property type="entry name" value="HTH_TetR"/>
</dbReference>
<dbReference type="PANTHER" id="PTHR30055:SF234">
    <property type="entry name" value="HTH-TYPE TRANSCRIPTIONAL REGULATOR BETI"/>
    <property type="match status" value="1"/>
</dbReference>
<dbReference type="PANTHER" id="PTHR30055">
    <property type="entry name" value="HTH-TYPE TRANSCRIPTIONAL REGULATOR RUTR"/>
    <property type="match status" value="1"/>
</dbReference>
<dbReference type="Pfam" id="PF00440">
    <property type="entry name" value="TetR_N"/>
    <property type="match status" value="1"/>
</dbReference>
<dbReference type="PRINTS" id="PR00455">
    <property type="entry name" value="HTHTETR"/>
</dbReference>
<dbReference type="SUPFAM" id="SSF46689">
    <property type="entry name" value="Homeodomain-like"/>
    <property type="match status" value="1"/>
</dbReference>
<dbReference type="PROSITE" id="PS01081">
    <property type="entry name" value="HTH_TETR_1"/>
    <property type="match status" value="1"/>
</dbReference>
<dbReference type="PROSITE" id="PS50977">
    <property type="entry name" value="HTH_TETR_2"/>
    <property type="match status" value="1"/>
</dbReference>
<feature type="chain" id="PRO_0000070668" description="Uncharacterized HTH-type transcriptional regulator Rv2912c">
    <location>
        <begin position="1"/>
        <end position="195"/>
    </location>
</feature>
<feature type="domain" description="HTH tetR-type" evidence="1">
    <location>
        <begin position="10"/>
        <end position="70"/>
    </location>
</feature>
<feature type="DNA-binding region" description="H-T-H motif" evidence="1">
    <location>
        <begin position="33"/>
        <end position="52"/>
    </location>
</feature>